<evidence type="ECO:0000255" key="1">
    <source>
        <dbReference type="HAMAP-Rule" id="MF_00480"/>
    </source>
</evidence>
<evidence type="ECO:0000305" key="2"/>
<keyword id="KW-0687">Ribonucleoprotein</keyword>
<keyword id="KW-0689">Ribosomal protein</keyword>
<keyword id="KW-0694">RNA-binding</keyword>
<keyword id="KW-0699">rRNA-binding</keyword>
<keyword id="KW-0820">tRNA-binding</keyword>
<gene>
    <name evidence="1" type="primary">rpsG</name>
    <name type="ordered locus">BMEA_A1282</name>
</gene>
<accession>C0RJK5</accession>
<sequence>MSRRHKAEKREINPDPKFGDLVITKFMNAVMLHGKKSVAESIVYGALDAIEAKAKSEPVALFHQALDNVAPHIEVRSRRVGGATYQVPVDVRPERRQALAIRWLINAARGRNETTMVDRLSGELLDAANNRGSAVKKREDTHRMAEANRAFSHYRW</sequence>
<organism>
    <name type="scientific">Brucella melitensis biotype 2 (strain ATCC 23457)</name>
    <dbReference type="NCBI Taxonomy" id="546272"/>
    <lineage>
        <taxon>Bacteria</taxon>
        <taxon>Pseudomonadati</taxon>
        <taxon>Pseudomonadota</taxon>
        <taxon>Alphaproteobacteria</taxon>
        <taxon>Hyphomicrobiales</taxon>
        <taxon>Brucellaceae</taxon>
        <taxon>Brucella/Ochrobactrum group</taxon>
        <taxon>Brucella</taxon>
    </lineage>
</organism>
<comment type="function">
    <text evidence="1">One of the primary rRNA binding proteins, it binds directly to 16S rRNA where it nucleates assembly of the head domain of the 30S subunit. Is located at the subunit interface close to the decoding center, probably blocks exit of the E-site tRNA.</text>
</comment>
<comment type="subunit">
    <text evidence="1">Part of the 30S ribosomal subunit. Contacts proteins S9 and S11.</text>
</comment>
<comment type="similarity">
    <text evidence="1">Belongs to the universal ribosomal protein uS7 family.</text>
</comment>
<protein>
    <recommendedName>
        <fullName evidence="1">Small ribosomal subunit protein uS7</fullName>
    </recommendedName>
    <alternativeName>
        <fullName evidence="2">30S ribosomal protein S7</fullName>
    </alternativeName>
</protein>
<feature type="chain" id="PRO_1000135585" description="Small ribosomal subunit protein uS7">
    <location>
        <begin position="1"/>
        <end position="156"/>
    </location>
</feature>
<name>RS7_BRUMB</name>
<reference key="1">
    <citation type="submission" date="2009-03" db="EMBL/GenBank/DDBJ databases">
        <title>Brucella melitensis ATCC 23457 whole genome shotgun sequencing project.</title>
        <authorList>
            <person name="Setubal J.C."/>
            <person name="Boyle S."/>
            <person name="Crasta O.R."/>
            <person name="Gillespie J.J."/>
            <person name="Kenyon R.W."/>
            <person name="Lu J."/>
            <person name="Mane S."/>
            <person name="Nagrani S."/>
            <person name="Shallom J.M."/>
            <person name="Shallom S."/>
            <person name="Shukla M."/>
            <person name="Snyder E.E."/>
            <person name="Sobral B.W."/>
            <person name="Wattam A.R."/>
            <person name="Will R."/>
            <person name="Williams K."/>
            <person name="Yoo H."/>
            <person name="Munk C."/>
            <person name="Tapia R."/>
            <person name="Han C."/>
            <person name="Detter J.C."/>
            <person name="Bruce D."/>
            <person name="Brettin T.S."/>
        </authorList>
    </citation>
    <scope>NUCLEOTIDE SEQUENCE [LARGE SCALE GENOMIC DNA]</scope>
    <source>
        <strain>ATCC 23457</strain>
    </source>
</reference>
<dbReference type="EMBL" id="CP001488">
    <property type="protein sequence ID" value="ACO01013.1"/>
    <property type="molecule type" value="Genomic_DNA"/>
</dbReference>
<dbReference type="RefSeq" id="WP_002964365.1">
    <property type="nucleotide sequence ID" value="NC_012441.1"/>
</dbReference>
<dbReference type="SMR" id="C0RJK5"/>
<dbReference type="GeneID" id="97533521"/>
<dbReference type="KEGG" id="bmi:BMEA_A1282"/>
<dbReference type="HOGENOM" id="CLU_072226_1_1_5"/>
<dbReference type="Proteomes" id="UP000001748">
    <property type="component" value="Chromosome I"/>
</dbReference>
<dbReference type="GO" id="GO:0015935">
    <property type="term" value="C:small ribosomal subunit"/>
    <property type="evidence" value="ECO:0007669"/>
    <property type="project" value="InterPro"/>
</dbReference>
<dbReference type="GO" id="GO:0019843">
    <property type="term" value="F:rRNA binding"/>
    <property type="evidence" value="ECO:0007669"/>
    <property type="project" value="UniProtKB-UniRule"/>
</dbReference>
<dbReference type="GO" id="GO:0003735">
    <property type="term" value="F:structural constituent of ribosome"/>
    <property type="evidence" value="ECO:0007669"/>
    <property type="project" value="InterPro"/>
</dbReference>
<dbReference type="GO" id="GO:0000049">
    <property type="term" value="F:tRNA binding"/>
    <property type="evidence" value="ECO:0007669"/>
    <property type="project" value="UniProtKB-UniRule"/>
</dbReference>
<dbReference type="GO" id="GO:0006412">
    <property type="term" value="P:translation"/>
    <property type="evidence" value="ECO:0007669"/>
    <property type="project" value="UniProtKB-UniRule"/>
</dbReference>
<dbReference type="CDD" id="cd14869">
    <property type="entry name" value="uS7_Bacteria"/>
    <property type="match status" value="1"/>
</dbReference>
<dbReference type="FunFam" id="1.10.455.10:FF:000001">
    <property type="entry name" value="30S ribosomal protein S7"/>
    <property type="match status" value="1"/>
</dbReference>
<dbReference type="Gene3D" id="1.10.455.10">
    <property type="entry name" value="Ribosomal protein S7 domain"/>
    <property type="match status" value="1"/>
</dbReference>
<dbReference type="HAMAP" id="MF_00480_B">
    <property type="entry name" value="Ribosomal_uS7_B"/>
    <property type="match status" value="1"/>
</dbReference>
<dbReference type="InterPro" id="IPR000235">
    <property type="entry name" value="Ribosomal_uS7"/>
</dbReference>
<dbReference type="InterPro" id="IPR005717">
    <property type="entry name" value="Ribosomal_uS7_bac/org-type"/>
</dbReference>
<dbReference type="InterPro" id="IPR020606">
    <property type="entry name" value="Ribosomal_uS7_CS"/>
</dbReference>
<dbReference type="InterPro" id="IPR023798">
    <property type="entry name" value="Ribosomal_uS7_dom"/>
</dbReference>
<dbReference type="InterPro" id="IPR036823">
    <property type="entry name" value="Ribosomal_uS7_dom_sf"/>
</dbReference>
<dbReference type="NCBIfam" id="TIGR01029">
    <property type="entry name" value="rpsG_bact"/>
    <property type="match status" value="1"/>
</dbReference>
<dbReference type="PANTHER" id="PTHR11205">
    <property type="entry name" value="RIBOSOMAL PROTEIN S7"/>
    <property type="match status" value="1"/>
</dbReference>
<dbReference type="Pfam" id="PF00177">
    <property type="entry name" value="Ribosomal_S7"/>
    <property type="match status" value="1"/>
</dbReference>
<dbReference type="PIRSF" id="PIRSF002122">
    <property type="entry name" value="RPS7p_RPS7a_RPS5e_RPS7o"/>
    <property type="match status" value="1"/>
</dbReference>
<dbReference type="SUPFAM" id="SSF47973">
    <property type="entry name" value="Ribosomal protein S7"/>
    <property type="match status" value="1"/>
</dbReference>
<dbReference type="PROSITE" id="PS00052">
    <property type="entry name" value="RIBOSOMAL_S7"/>
    <property type="match status" value="1"/>
</dbReference>
<proteinExistence type="inferred from homology"/>